<reference key="1">
    <citation type="journal article" date="1991" name="Mol. Microbiol.">
        <title>nolC, a Rhizobium fredii gene involved in cultivar-specific nodulation of soybean, shares homology with a heat-shock gene.</title>
        <authorList>
            <person name="Krishnan H.B."/>
            <person name="Pueppke S.G."/>
        </authorList>
    </citation>
    <scope>NUCLEOTIDE SEQUENCE [GENOMIC DNA]</scope>
    <source>
        <strain>USDA 257</strain>
    </source>
</reference>
<feature type="chain" id="PRO_0000071005" description="Protein NolC">
    <location>
        <begin position="1"/>
        <end position="392"/>
    </location>
</feature>
<feature type="domain" description="J" evidence="1">
    <location>
        <begin position="2"/>
        <end position="71"/>
    </location>
</feature>
<feature type="region of interest" description="Disordered" evidence="2">
    <location>
        <begin position="103"/>
        <end position="142"/>
    </location>
</feature>
<feature type="region of interest" description="Disordered" evidence="2">
    <location>
        <begin position="157"/>
        <end position="244"/>
    </location>
</feature>
<feature type="compositionally biased region" description="Basic and acidic residues" evidence="2">
    <location>
        <begin position="157"/>
        <end position="170"/>
    </location>
</feature>
<feature type="compositionally biased region" description="Low complexity" evidence="2">
    <location>
        <begin position="171"/>
        <end position="185"/>
    </location>
</feature>
<feature type="compositionally biased region" description="Basic and acidic residues" evidence="2">
    <location>
        <begin position="186"/>
        <end position="203"/>
    </location>
</feature>
<feature type="compositionally biased region" description="Basic residues" evidence="2">
    <location>
        <begin position="227"/>
        <end position="241"/>
    </location>
</feature>
<protein>
    <recommendedName>
        <fullName>Protein NolC</fullName>
    </recommendedName>
</protein>
<sequence>MKRDLYETLGVARNADEKELKSAFRKLAMQYHPDRNPGDQEAEKSFKEINQAYETLKDPQKRAAYDRYGHAAFEQGGMGAGFGNGFAGGSAGGTSRHFRRHLRRDDGRRSSAPLLGRSRTRCGPSLQHGDHPRGGLFRQDGADPRADVGHLRRLHGLGREAGHQPEDLRHLPGLRPYPRRPGLLLDRTHLPDLRRSRSDDHRSLQQMPWPGPGHRGAHAVGQYSDRHRGRHAYPPLRRGRTGLRGGPPGDLYIFLSVRPHEFYQRDGADLYCSVPISMTTATLGGKFDVTTLDGTKSRVTVPEGTQAGKQFRLKGKGMHGRALQPDGRPLYPDPDRDAAEAHQAPARIAAGVRADLVQGEQSAIDGLLLPHERFLRYTERIATPGFRLCPSP</sequence>
<dbReference type="EMBL" id="L03521">
    <property type="protein sequence ID" value="AAA26333.1"/>
    <property type="molecule type" value="Genomic_DNA"/>
</dbReference>
<dbReference type="PIR" id="S15295">
    <property type="entry name" value="S15295"/>
</dbReference>
<dbReference type="SMR" id="P26508"/>
<dbReference type="GO" id="GO:0005737">
    <property type="term" value="C:cytoplasm"/>
    <property type="evidence" value="ECO:0007669"/>
    <property type="project" value="TreeGrafter"/>
</dbReference>
<dbReference type="GO" id="GO:0051082">
    <property type="term" value="F:unfolded protein binding"/>
    <property type="evidence" value="ECO:0007669"/>
    <property type="project" value="InterPro"/>
</dbReference>
<dbReference type="GO" id="GO:0051085">
    <property type="term" value="P:chaperone cofactor-dependent protein refolding"/>
    <property type="evidence" value="ECO:0007669"/>
    <property type="project" value="TreeGrafter"/>
</dbReference>
<dbReference type="GO" id="GO:0042026">
    <property type="term" value="P:protein refolding"/>
    <property type="evidence" value="ECO:0007669"/>
    <property type="project" value="TreeGrafter"/>
</dbReference>
<dbReference type="CDD" id="cd06257">
    <property type="entry name" value="DnaJ"/>
    <property type="match status" value="1"/>
</dbReference>
<dbReference type="CDD" id="cd10747">
    <property type="entry name" value="DnaJ_C"/>
    <property type="match status" value="1"/>
</dbReference>
<dbReference type="Gene3D" id="1.10.287.110">
    <property type="entry name" value="DnaJ domain"/>
    <property type="match status" value="1"/>
</dbReference>
<dbReference type="Gene3D" id="2.60.260.20">
    <property type="entry name" value="Urease metallochaperone UreE, N-terminal domain"/>
    <property type="match status" value="1"/>
</dbReference>
<dbReference type="InterPro" id="IPR002939">
    <property type="entry name" value="DnaJ_C"/>
</dbReference>
<dbReference type="InterPro" id="IPR001623">
    <property type="entry name" value="DnaJ_domain"/>
</dbReference>
<dbReference type="InterPro" id="IPR018253">
    <property type="entry name" value="DnaJ_domain_CS"/>
</dbReference>
<dbReference type="InterPro" id="IPR008971">
    <property type="entry name" value="HSP40/DnaJ_pept-bd"/>
</dbReference>
<dbReference type="InterPro" id="IPR036869">
    <property type="entry name" value="J_dom_sf"/>
</dbReference>
<dbReference type="PANTHER" id="PTHR43096:SF48">
    <property type="entry name" value="CHAPERONE PROTEIN DNAJ"/>
    <property type="match status" value="1"/>
</dbReference>
<dbReference type="PANTHER" id="PTHR43096">
    <property type="entry name" value="DNAJ HOMOLOG 1, MITOCHONDRIAL-RELATED"/>
    <property type="match status" value="1"/>
</dbReference>
<dbReference type="Pfam" id="PF00226">
    <property type="entry name" value="DnaJ"/>
    <property type="match status" value="1"/>
</dbReference>
<dbReference type="Pfam" id="PF01556">
    <property type="entry name" value="DnaJ_C"/>
    <property type="match status" value="1"/>
</dbReference>
<dbReference type="PRINTS" id="PR00625">
    <property type="entry name" value="JDOMAIN"/>
</dbReference>
<dbReference type="SMART" id="SM00271">
    <property type="entry name" value="DnaJ"/>
    <property type="match status" value="1"/>
</dbReference>
<dbReference type="SUPFAM" id="SSF46565">
    <property type="entry name" value="Chaperone J-domain"/>
    <property type="match status" value="1"/>
</dbReference>
<dbReference type="SUPFAM" id="SSF49493">
    <property type="entry name" value="HSP40/DnaJ peptide-binding domain"/>
    <property type="match status" value="1"/>
</dbReference>
<dbReference type="PROSITE" id="PS00636">
    <property type="entry name" value="DNAJ_1"/>
    <property type="match status" value="1"/>
</dbReference>
<dbReference type="PROSITE" id="PS50076">
    <property type="entry name" value="DNAJ_2"/>
    <property type="match status" value="1"/>
</dbReference>
<gene>
    <name type="primary">nolC</name>
</gene>
<evidence type="ECO:0000255" key="1">
    <source>
        <dbReference type="PROSITE-ProRule" id="PRU00286"/>
    </source>
</evidence>
<evidence type="ECO:0000256" key="2">
    <source>
        <dbReference type="SAM" id="MobiDB-lite"/>
    </source>
</evidence>
<accession>P26508</accession>
<name>NOLC_RHIFR</name>
<proteinExistence type="predicted"/>
<keyword id="KW-0143">Chaperone</keyword>
<keyword id="KW-0536">Nodulation</keyword>
<organism>
    <name type="scientific">Rhizobium fredii</name>
    <name type="common">Sinorhizobium fredii</name>
    <dbReference type="NCBI Taxonomy" id="380"/>
    <lineage>
        <taxon>Bacteria</taxon>
        <taxon>Pseudomonadati</taxon>
        <taxon>Pseudomonadota</taxon>
        <taxon>Alphaproteobacteria</taxon>
        <taxon>Hyphomicrobiales</taxon>
        <taxon>Rhizobiaceae</taxon>
        <taxon>Sinorhizobium/Ensifer group</taxon>
        <taxon>Sinorhizobium</taxon>
    </lineage>
</organism>